<gene>
    <name evidence="1" type="primary">eIF3f2</name>
    <name evidence="1" type="synonym">eIF3-S5-2</name>
    <name type="ORF">GA25107</name>
</gene>
<reference key="1">
    <citation type="journal article" date="2005" name="Genome Res.">
        <title>Comparative genome sequencing of Drosophila pseudoobscura: chromosomal, gene, and cis-element evolution.</title>
        <authorList>
            <person name="Richards S."/>
            <person name="Liu Y."/>
            <person name="Bettencourt B.R."/>
            <person name="Hradecky P."/>
            <person name="Letovsky S."/>
            <person name="Nielsen R."/>
            <person name="Thornton K."/>
            <person name="Hubisz M.J."/>
            <person name="Chen R."/>
            <person name="Meisel R.P."/>
            <person name="Couronne O."/>
            <person name="Hua S."/>
            <person name="Smith M.A."/>
            <person name="Zhang P."/>
            <person name="Liu J."/>
            <person name="Bussemaker H.J."/>
            <person name="van Batenburg M.F."/>
            <person name="Howells S.L."/>
            <person name="Scherer S.E."/>
            <person name="Sodergren E."/>
            <person name="Matthews B.B."/>
            <person name="Crosby M.A."/>
            <person name="Schroeder A.J."/>
            <person name="Ortiz-Barrientos D."/>
            <person name="Rives C.M."/>
            <person name="Metzker M.L."/>
            <person name="Muzny D.M."/>
            <person name="Scott G."/>
            <person name="Steffen D."/>
            <person name="Wheeler D.A."/>
            <person name="Worley K.C."/>
            <person name="Havlak P."/>
            <person name="Durbin K.J."/>
            <person name="Egan A."/>
            <person name="Gill R."/>
            <person name="Hume J."/>
            <person name="Morgan M.B."/>
            <person name="Miner G."/>
            <person name="Hamilton C."/>
            <person name="Huang Y."/>
            <person name="Waldron L."/>
            <person name="Verduzco D."/>
            <person name="Clerc-Blankenburg K.P."/>
            <person name="Dubchak I."/>
            <person name="Noor M.A.F."/>
            <person name="Anderson W."/>
            <person name="White K.P."/>
            <person name="Clark A.G."/>
            <person name="Schaeffer S.W."/>
            <person name="Gelbart W.M."/>
            <person name="Weinstock G.M."/>
            <person name="Gibbs R.A."/>
        </authorList>
    </citation>
    <scope>NUCLEOTIDE SEQUENCE [LARGE SCALE GENOMIC DNA]</scope>
    <source>
        <strain>MV2-25 / Tucson 14011-0121.94</strain>
    </source>
</reference>
<proteinExistence type="inferred from homology"/>
<organism>
    <name type="scientific">Drosophila pseudoobscura pseudoobscura</name>
    <name type="common">Fruit fly</name>
    <dbReference type="NCBI Taxonomy" id="46245"/>
    <lineage>
        <taxon>Eukaryota</taxon>
        <taxon>Metazoa</taxon>
        <taxon>Ecdysozoa</taxon>
        <taxon>Arthropoda</taxon>
        <taxon>Hexapoda</taxon>
        <taxon>Insecta</taxon>
        <taxon>Pterygota</taxon>
        <taxon>Neoptera</taxon>
        <taxon>Endopterygota</taxon>
        <taxon>Diptera</taxon>
        <taxon>Brachycera</taxon>
        <taxon>Muscomorpha</taxon>
        <taxon>Ephydroidea</taxon>
        <taxon>Drosophilidae</taxon>
        <taxon>Drosophila</taxon>
        <taxon>Sophophora</taxon>
    </lineage>
</organism>
<comment type="function">
    <text evidence="1">Component of the eukaryotic translation initiation factor 3 (eIF-3) complex, which is involved in protein synthesis of a specialized repertoire of mRNAs and, together with other initiation factors, stimulates binding of mRNA and methionyl-tRNAi to the 40S ribosome. The eIF-3 complex specifically targets and initiates translation of a subset of mRNAs involved in cell proliferation.</text>
</comment>
<comment type="subunit">
    <text evidence="1">Component of the eukaryotic translation initiation factor 3 (eIF-3) complex. The eIF-3 complex interacts with pix.</text>
</comment>
<comment type="subcellular location">
    <subcellularLocation>
        <location evidence="1">Cytoplasm</location>
    </subcellularLocation>
</comment>
<comment type="similarity">
    <text evidence="1">Belongs to the eIF-3 subunit F family.</text>
</comment>
<sequence length="288" mass="32555">MSLSNFNLQSKVLLHPLVLFQIIDAYERRAKDVPEVLGTLLGTVAGKTGRIEITNCFSVVHRMHGDNNCHIDLDLKYDNDMLELAQIAYPQEKVLGWFSTGKSVSAAAVELHEYYERQCHNGQPLHLLMDTSLRGQRMNTRIFCAVATGVPGGTKGLMFSLLPMDIYFGSPDIVAMRHMGRQCAQPTKDAGRLLPELEQVVDATKDIQQKLDLVLRYINDILNRKRRPDNTVGRALHDVLTSVPMVEAERFRHMFNTNMRDLLMSLTLSSMIKTQLQLSERLSNMVDA</sequence>
<dbReference type="EMBL" id="CM000071">
    <property type="protein sequence ID" value="EDY69533.1"/>
    <property type="molecule type" value="Genomic_DNA"/>
</dbReference>
<dbReference type="RefSeq" id="XP_002138975.1">
    <property type="nucleotide sequence ID" value="XM_002138939.2"/>
</dbReference>
<dbReference type="SMR" id="B5E1N0"/>
<dbReference type="FunCoup" id="B5E1N0">
    <property type="interactions" value="401"/>
</dbReference>
<dbReference type="STRING" id="46245.B5E1N0"/>
<dbReference type="EnsemblMetazoa" id="FBtr0280279">
    <property type="protein sequence ID" value="FBpp0278717"/>
    <property type="gene ID" value="FBgn0246490"/>
</dbReference>
<dbReference type="GeneID" id="6899050"/>
<dbReference type="KEGG" id="dpo:6899050"/>
<dbReference type="CTD" id="35547"/>
<dbReference type="eggNOG" id="KOG2975">
    <property type="taxonomic scope" value="Eukaryota"/>
</dbReference>
<dbReference type="HOGENOM" id="CLU_027018_0_1_1"/>
<dbReference type="InParanoid" id="B5E1N0"/>
<dbReference type="OMA" id="IEITNCF"/>
<dbReference type="Proteomes" id="UP000001819">
    <property type="component" value="Chromosome 3"/>
</dbReference>
<dbReference type="Bgee" id="FBgn0246490">
    <property type="expression patterns" value="Expressed in male reproductive system and 2 other cell types or tissues"/>
</dbReference>
<dbReference type="GO" id="GO:0016282">
    <property type="term" value="C:eukaryotic 43S preinitiation complex"/>
    <property type="evidence" value="ECO:0007669"/>
    <property type="project" value="UniProtKB-UniRule"/>
</dbReference>
<dbReference type="GO" id="GO:0033290">
    <property type="term" value="C:eukaryotic 48S preinitiation complex"/>
    <property type="evidence" value="ECO:0007669"/>
    <property type="project" value="UniProtKB-UniRule"/>
</dbReference>
<dbReference type="GO" id="GO:0071541">
    <property type="term" value="C:eukaryotic translation initiation factor 3 complex, eIF3m"/>
    <property type="evidence" value="ECO:0007669"/>
    <property type="project" value="TreeGrafter"/>
</dbReference>
<dbReference type="GO" id="GO:0008237">
    <property type="term" value="F:metallopeptidase activity"/>
    <property type="evidence" value="ECO:0007669"/>
    <property type="project" value="InterPro"/>
</dbReference>
<dbReference type="GO" id="GO:0003743">
    <property type="term" value="F:translation initiation factor activity"/>
    <property type="evidence" value="ECO:0007669"/>
    <property type="project" value="UniProtKB-UniRule"/>
</dbReference>
<dbReference type="GO" id="GO:0031369">
    <property type="term" value="F:translation initiation factor binding"/>
    <property type="evidence" value="ECO:0007669"/>
    <property type="project" value="InterPro"/>
</dbReference>
<dbReference type="GO" id="GO:0001732">
    <property type="term" value="P:formation of cytoplasmic translation initiation complex"/>
    <property type="evidence" value="ECO:0007669"/>
    <property type="project" value="UniProtKB-UniRule"/>
</dbReference>
<dbReference type="CDD" id="cd08064">
    <property type="entry name" value="MPN_eIF3f"/>
    <property type="match status" value="1"/>
</dbReference>
<dbReference type="Gene3D" id="3.40.140.10">
    <property type="entry name" value="Cytidine Deaminase, domain 2"/>
    <property type="match status" value="1"/>
</dbReference>
<dbReference type="HAMAP" id="MF_03005">
    <property type="entry name" value="eIF3f"/>
    <property type="match status" value="1"/>
</dbReference>
<dbReference type="InterPro" id="IPR027531">
    <property type="entry name" value="eIF3f"/>
</dbReference>
<dbReference type="InterPro" id="IPR024969">
    <property type="entry name" value="EIF3F/CSN6-like_C"/>
</dbReference>
<dbReference type="InterPro" id="IPR000555">
    <property type="entry name" value="JAMM/MPN+_dom"/>
</dbReference>
<dbReference type="InterPro" id="IPR037518">
    <property type="entry name" value="MPN"/>
</dbReference>
<dbReference type="PANTHER" id="PTHR10540:SF6">
    <property type="entry name" value="EUKARYOTIC TRANSLATION INITIATION FACTOR 3 SUBUNIT F"/>
    <property type="match status" value="1"/>
</dbReference>
<dbReference type="PANTHER" id="PTHR10540">
    <property type="entry name" value="EUKARYOTIC TRANSLATION INITIATION FACTOR 3 SUBUNIT F-RELATED"/>
    <property type="match status" value="1"/>
</dbReference>
<dbReference type="Pfam" id="PF01398">
    <property type="entry name" value="JAB"/>
    <property type="match status" value="1"/>
</dbReference>
<dbReference type="Pfam" id="PF13012">
    <property type="entry name" value="MitMem_reg"/>
    <property type="match status" value="1"/>
</dbReference>
<dbReference type="SMART" id="SM00232">
    <property type="entry name" value="JAB_MPN"/>
    <property type="match status" value="1"/>
</dbReference>
<dbReference type="PROSITE" id="PS50249">
    <property type="entry name" value="MPN"/>
    <property type="match status" value="1"/>
</dbReference>
<protein>
    <recommendedName>
        <fullName evidence="1">Eukaryotic translation initiation factor 3 subunit F-2</fullName>
        <shortName evidence="1">eIF3f-2</shortName>
    </recommendedName>
    <alternativeName>
        <fullName evidence="1">Eukaryotic translation initiation factor 3 subunit 5-2</fullName>
    </alternativeName>
</protein>
<keyword id="KW-0963">Cytoplasm</keyword>
<keyword id="KW-0396">Initiation factor</keyword>
<keyword id="KW-0648">Protein biosynthesis</keyword>
<keyword id="KW-1185">Reference proteome</keyword>
<evidence type="ECO:0000255" key="1">
    <source>
        <dbReference type="HAMAP-Rule" id="MF_03005"/>
    </source>
</evidence>
<evidence type="ECO:0000255" key="2">
    <source>
        <dbReference type="PROSITE-ProRule" id="PRU01182"/>
    </source>
</evidence>
<name>EI3F2_DROPS</name>
<accession>B5E1N0</accession>
<feature type="chain" id="PRO_0000364310" description="Eukaryotic translation initiation factor 3 subunit F-2">
    <location>
        <begin position="1"/>
        <end position="288"/>
    </location>
</feature>
<feature type="domain" description="MPN" evidence="2">
    <location>
        <begin position="12"/>
        <end position="149"/>
    </location>
</feature>